<reference key="1">
    <citation type="journal article" date="2012" name="Proc. Natl. Acad. Sci. U.S.A.">
        <title>Genetic, molecular, and biochemical basis of fungal tropolone biosynthesis.</title>
        <authorList>
            <person name="Davison J."/>
            <person name="al Fahad A."/>
            <person name="Cai M."/>
            <person name="Song Z."/>
            <person name="Yehia S.Y."/>
            <person name="Lazarus C.M."/>
            <person name="Bailey A.M."/>
            <person name="Simpson T.J."/>
            <person name="Cox R.J."/>
        </authorList>
    </citation>
    <scope>NUCLEOTIDE SEQUENCE [GENOMIC DNA]</scope>
    <scope>FUNCTION</scope>
    <source>
        <strain>ATCC 10500 / CBS 375.48 / QM 6759 / NRRL 1006</strain>
    </source>
</reference>
<reference key="2">
    <citation type="journal article" date="2014" name="Angew. Chem. Int. Ed.">
        <title>The biosynthesis and catabolism of the maleic anhydride moiety of stipitatonic acid.</title>
        <authorList>
            <person name="al Fahad A."/>
            <person name="Abood A."/>
            <person name="Simpson T.J."/>
            <person name="Cox R.J."/>
        </authorList>
    </citation>
    <scope>NUCLEOTIDE SEQUENCE [GENOMIC DNA]</scope>
    <scope>FUNCTION</scope>
    <source>
        <strain>ATCC 10500 / CBS 375.48 / QM 6759 / NRRL 1006</strain>
    </source>
</reference>
<reference key="3">
    <citation type="journal article" date="2015" name="Genome Announc.">
        <title>Genome sequence of the AIDS-associated pathogen Penicillium marneffei (ATCC18224) and its near taxonomic relative Talaromyces stipitatus (ATCC10500).</title>
        <authorList>
            <person name="Nierman W.C."/>
            <person name="Fedorova-Abrams N.D."/>
            <person name="Andrianopoulos A."/>
        </authorList>
    </citation>
    <scope>NUCLEOTIDE SEQUENCE [LARGE SCALE GENOMIC DNA]</scope>
    <source>
        <strain>ATCC 10500 / CBS 375.48 / QM 6759 / NRRL 1006</strain>
    </source>
</reference>
<accession>B8M9K6</accession>
<gene>
    <name evidence="4" type="primary">tropK</name>
    <name evidence="3" type="synonym">tsR6</name>
    <name type="ORF">TSTA_117810</name>
</gene>
<comment type="function">
    <text evidence="6 7">Transcription factor that regulates the expression of the gene cluster that mediates the biosynthesis tropolone class of fungal maleic anhydrides, including stipitaldehydic, stipitatonic and stipitatic acids (PubMed:22508998, PubMed:24863423).</text>
</comment>
<comment type="subcellular location">
    <subcellularLocation>
        <location evidence="1">Nucleus</location>
    </subcellularLocation>
</comment>
<dbReference type="EMBL" id="BK008910">
    <property type="protein sequence ID" value="DAA64710.1"/>
    <property type="molecule type" value="Genomic_DNA"/>
</dbReference>
<dbReference type="EMBL" id="EQ962655">
    <property type="protein sequence ID" value="EED18009.1"/>
    <property type="molecule type" value="Genomic_DNA"/>
</dbReference>
<dbReference type="RefSeq" id="XP_002482001.1">
    <property type="nucleotide sequence ID" value="XM_002481956.1"/>
</dbReference>
<dbReference type="STRING" id="441959.B8M9K6"/>
<dbReference type="GeneID" id="8105839"/>
<dbReference type="VEuPathDB" id="FungiDB:TSTA_117810"/>
<dbReference type="eggNOG" id="ENOG502SH49">
    <property type="taxonomic scope" value="Eukaryota"/>
</dbReference>
<dbReference type="HOGENOM" id="CLU_011017_3_1_1"/>
<dbReference type="InParanoid" id="B8M9K6"/>
<dbReference type="OrthoDB" id="3037908at2759"/>
<dbReference type="PhylomeDB" id="B8M9K6"/>
<dbReference type="Proteomes" id="UP000001745">
    <property type="component" value="Unassembled WGS sequence"/>
</dbReference>
<dbReference type="GO" id="GO:0005634">
    <property type="term" value="C:nucleus"/>
    <property type="evidence" value="ECO:0007669"/>
    <property type="project" value="UniProtKB-SubCell"/>
</dbReference>
<dbReference type="GO" id="GO:0003677">
    <property type="term" value="F:DNA binding"/>
    <property type="evidence" value="ECO:0007669"/>
    <property type="project" value="UniProtKB-KW"/>
</dbReference>
<dbReference type="GO" id="GO:0000981">
    <property type="term" value="F:DNA-binding transcription factor activity, RNA polymerase II-specific"/>
    <property type="evidence" value="ECO:0007669"/>
    <property type="project" value="InterPro"/>
</dbReference>
<dbReference type="GO" id="GO:0008270">
    <property type="term" value="F:zinc ion binding"/>
    <property type="evidence" value="ECO:0007669"/>
    <property type="project" value="InterPro"/>
</dbReference>
<dbReference type="GO" id="GO:0006351">
    <property type="term" value="P:DNA-templated transcription"/>
    <property type="evidence" value="ECO:0007669"/>
    <property type="project" value="InterPro"/>
</dbReference>
<dbReference type="CDD" id="cd12148">
    <property type="entry name" value="fungal_TF_MHR"/>
    <property type="match status" value="1"/>
</dbReference>
<dbReference type="CDD" id="cd00067">
    <property type="entry name" value="GAL4"/>
    <property type="match status" value="1"/>
</dbReference>
<dbReference type="Gene3D" id="4.10.240.10">
    <property type="entry name" value="Zn(2)-C6 fungal-type DNA-binding domain"/>
    <property type="match status" value="1"/>
</dbReference>
<dbReference type="InterPro" id="IPR050815">
    <property type="entry name" value="TF_fung"/>
</dbReference>
<dbReference type="InterPro" id="IPR007219">
    <property type="entry name" value="Transcription_factor_dom_fun"/>
</dbReference>
<dbReference type="InterPro" id="IPR036864">
    <property type="entry name" value="Zn2-C6_fun-type_DNA-bd_sf"/>
</dbReference>
<dbReference type="InterPro" id="IPR001138">
    <property type="entry name" value="Zn2Cys6_DnaBD"/>
</dbReference>
<dbReference type="PANTHER" id="PTHR47338:SF3">
    <property type="entry name" value="C6 FINGER DOMAIN TRANSCRIPTION FACTOR DBAA-RELATED"/>
    <property type="match status" value="1"/>
</dbReference>
<dbReference type="PANTHER" id="PTHR47338">
    <property type="entry name" value="ZN(II)2CYS6 TRANSCRIPTION FACTOR (EUROFUNG)-RELATED"/>
    <property type="match status" value="1"/>
</dbReference>
<dbReference type="Pfam" id="PF04082">
    <property type="entry name" value="Fungal_trans"/>
    <property type="match status" value="1"/>
</dbReference>
<dbReference type="Pfam" id="PF00172">
    <property type="entry name" value="Zn_clus"/>
    <property type="match status" value="1"/>
</dbReference>
<dbReference type="SMART" id="SM00906">
    <property type="entry name" value="Fungal_trans"/>
    <property type="match status" value="1"/>
</dbReference>
<dbReference type="SMART" id="SM00066">
    <property type="entry name" value="GAL4"/>
    <property type="match status" value="1"/>
</dbReference>
<dbReference type="SUPFAM" id="SSF57701">
    <property type="entry name" value="Zn2/Cys6 DNA-binding domain"/>
    <property type="match status" value="1"/>
</dbReference>
<dbReference type="PROSITE" id="PS00463">
    <property type="entry name" value="ZN2_CY6_FUNGAL_1"/>
    <property type="match status" value="1"/>
</dbReference>
<dbReference type="PROSITE" id="PS50048">
    <property type="entry name" value="ZN2_CY6_FUNGAL_2"/>
    <property type="match status" value="1"/>
</dbReference>
<protein>
    <recommendedName>
        <fullName evidence="5">Tropolone cluster transcription factor tropK</fullName>
    </recommendedName>
    <alternativeName>
        <fullName evidence="4">Tropolone synthesis protein K</fullName>
    </alternativeName>
</protein>
<feature type="chain" id="PRO_0000437137" description="Tropolone cluster transcription factor tropK">
    <location>
        <begin position="1"/>
        <end position="551"/>
    </location>
</feature>
<feature type="DNA-binding region" description="Zn(2)-C6 fungal-type" evidence="1">
    <location>
        <begin position="25"/>
        <end position="52"/>
    </location>
</feature>
<feature type="region of interest" description="Disordered" evidence="2">
    <location>
        <begin position="1"/>
        <end position="21"/>
    </location>
</feature>
<feature type="compositionally biased region" description="Polar residues" evidence="2">
    <location>
        <begin position="7"/>
        <end position="20"/>
    </location>
</feature>
<name>TROPK_TALSN</name>
<organism>
    <name type="scientific">Talaromyces stipitatus (strain ATCC 10500 / CBS 375.48 / QM 6759 / NRRL 1006)</name>
    <name type="common">Penicillium stipitatum</name>
    <dbReference type="NCBI Taxonomy" id="441959"/>
    <lineage>
        <taxon>Eukaryota</taxon>
        <taxon>Fungi</taxon>
        <taxon>Dikarya</taxon>
        <taxon>Ascomycota</taxon>
        <taxon>Pezizomycotina</taxon>
        <taxon>Eurotiomycetes</taxon>
        <taxon>Eurotiomycetidae</taxon>
        <taxon>Eurotiales</taxon>
        <taxon>Trichocomaceae</taxon>
        <taxon>Talaromyces</taxon>
        <taxon>Talaromyces sect. Talaromyces</taxon>
    </lineage>
</organism>
<sequence length="551" mass="63144">MSVAIKMSTNTVGGQSTRQPPGSACLHCRNKKMKCDALQPRCKNCFNAGVECIRSNNYSRKRSAQRDHIEGPQDRVETSDAEVYDVQPKFNPGLFNLDFHMDSFYDMDYNFLENITPESFPILSPLDSLPSLIPSETVECSQPQTVIETAGILAPPLNDPINDLMHEDLDQLYLDRVHRLIPILHRRRYFSWTRSPNRTDAQTCLQFAMWTLATSLSTQLQHLRESFYQRTCSLLDKFTAQDTAAPQIEYAQACILIVNYDLMKENFRRGWTSAGRCIRVIQLMRLFEIDRSKGRNDREDWIQREEKRRAFWMAYSLDLFISLRGEWPLSLTGTDFVRLPALDKDFDNSHYVEMPFLGTVLSGASSSVLSPWAESIVFATIIRRITALTSELEGLSPGSSSTNVWSKIDLLRNILKSRLASLSFKHQDSHFPFSDDPMETFMIMIAQSSVLYLYNTQKSFSRATESSQNISMALQYEAQMAAQEIANLSTSILHMSRFKIHPFTPLILAKCMEFYKSNQNLDEITQAAVKQIYELLRHISKVNNIAVEYLS</sequence>
<evidence type="ECO:0000255" key="1">
    <source>
        <dbReference type="PROSITE-ProRule" id="PRU00227"/>
    </source>
</evidence>
<evidence type="ECO:0000256" key="2">
    <source>
        <dbReference type="SAM" id="MobiDB-lite"/>
    </source>
</evidence>
<evidence type="ECO:0000303" key="3">
    <source>
    </source>
</evidence>
<evidence type="ECO:0000303" key="4">
    <source>
    </source>
</evidence>
<evidence type="ECO:0000305" key="5"/>
<evidence type="ECO:0000305" key="6">
    <source>
    </source>
</evidence>
<evidence type="ECO:0000305" key="7">
    <source>
    </source>
</evidence>
<keyword id="KW-0238">DNA-binding</keyword>
<keyword id="KW-0479">Metal-binding</keyword>
<keyword id="KW-0539">Nucleus</keyword>
<keyword id="KW-1185">Reference proteome</keyword>
<keyword id="KW-0804">Transcription</keyword>
<keyword id="KW-0805">Transcription regulation</keyword>
<keyword id="KW-0862">Zinc</keyword>
<proteinExistence type="inferred from homology"/>